<accession>P17658</accession>
<keyword id="KW-1003">Cell membrane</keyword>
<keyword id="KW-0407">Ion channel</keyword>
<keyword id="KW-0406">Ion transport</keyword>
<keyword id="KW-0449">Lipoprotein</keyword>
<keyword id="KW-0472">Membrane</keyword>
<keyword id="KW-0564">Palmitate</keyword>
<keyword id="KW-0597">Phosphoprotein</keyword>
<keyword id="KW-0630">Potassium</keyword>
<keyword id="KW-0631">Potassium channel</keyword>
<keyword id="KW-0633">Potassium transport</keyword>
<keyword id="KW-1267">Proteomics identification</keyword>
<keyword id="KW-1185">Reference proteome</keyword>
<keyword id="KW-0812">Transmembrane</keyword>
<keyword id="KW-1133">Transmembrane helix</keyword>
<keyword id="KW-0813">Transport</keyword>
<keyword id="KW-0851">Voltage-gated channel</keyword>
<evidence type="ECO:0000250" key="1">
    <source>
        <dbReference type="UniProtKB" id="P17659"/>
    </source>
</evidence>
<evidence type="ECO:0000250" key="2">
    <source>
        <dbReference type="UniProtKB" id="P63142"/>
    </source>
</evidence>
<evidence type="ECO:0000250" key="3">
    <source>
        <dbReference type="UniProtKB" id="Q61923"/>
    </source>
</evidence>
<evidence type="ECO:0000255" key="4"/>
<evidence type="ECO:0000256" key="5">
    <source>
        <dbReference type="SAM" id="MobiDB-lite"/>
    </source>
</evidence>
<evidence type="ECO:0000269" key="6">
    <source>
    </source>
</evidence>
<evidence type="ECO:0000269" key="7">
    <source>
    </source>
</evidence>
<evidence type="ECO:0000269" key="8">
    <source>
    </source>
</evidence>
<evidence type="ECO:0000303" key="9">
    <source>
    </source>
</evidence>
<evidence type="ECO:0000305" key="10"/>
<reference key="1">
    <citation type="journal article" date="1990" name="EMBO J.">
        <title>Cloning and expression of a human voltage-gated potassium channel. A novel member of the RCK potassium channel family.</title>
        <authorList>
            <person name="Grupe A."/>
            <person name="Schroeter K.H."/>
            <person name="Ruppersberg J.P."/>
            <person name="Stocker M."/>
            <person name="Drewes T."/>
            <person name="Beckh S."/>
            <person name="Pongs O."/>
        </authorList>
    </citation>
    <scope>NUCLEOTIDE SEQUENCE [MRNA]</scope>
    <scope>FUNCTION</scope>
    <scope>SUBCELLULAR LOCATION</scope>
    <scope>TRANSPORTER ACTIVITY</scope>
    <source>
        <tissue>Brain</tissue>
    </source>
</reference>
<reference key="2">
    <citation type="journal article" date="2004" name="Genome Res.">
        <title>The status, quality, and expansion of the NIH full-length cDNA project: the Mammalian Gene Collection (MGC).</title>
        <authorList>
            <consortium name="The MGC Project Team"/>
        </authorList>
    </citation>
    <scope>NUCLEOTIDE SEQUENCE [LARGE SCALE MRNA]</scope>
</reference>
<reference key="3">
    <citation type="journal article" date="2003" name="Biochem. Biophys. Res. Commun.">
        <title>Human Kv1.6 current displays a C-type-like inactivation when re-expressed in cos-7 cells.</title>
        <authorList>
            <person name="Guihard G."/>
            <person name="Bellocq C."/>
            <person name="Grelet E."/>
            <person name="Escande D."/>
        </authorList>
    </citation>
    <scope>FUNCTION</scope>
    <scope>SUBCELLULAR LOCATION</scope>
    <scope>TRANSPORTER ACTIVITY</scope>
</reference>
<reference key="4">
    <citation type="journal article" date="2022" name="Epilepsia">
        <title>De novo KCNA6 variants with attenuated KV 1.6 channel deactivation in patients with epilepsy.</title>
        <authorList>
            <consortium name="SYNAPS Study Group"/>
            <person name="Salpietro V."/>
            <person name="Galassi-Deforie V."/>
            <person name="Efthymiou S."/>
            <person name="O'Connor E."/>
            <person name="Marce-Grau A."/>
            <person name="Maroofian R."/>
            <person name="Striano P."/>
            <person name="Zara F."/>
            <person name="Morrow M."/>
            <person name="Reich A."/>
            <person name="Blevins A."/>
            <person name="Sala-Coromina J."/>
            <person name="Accogli A."/>
            <person name="Fortuna S."/>
            <person name="Alesandrini M."/>
            <person name="Au P.Y.B."/>
            <person name="Singhal N.S."/>
            <person name="Cogne B."/>
            <person name="Isidor B."/>
            <person name="Hanna M.G."/>
            <person name="Macaya A."/>
            <person name="Kullmann D.M."/>
            <person name="Houlden H."/>
            <person name="Maennikkoe R."/>
        </authorList>
    </citation>
    <scope>VARIANTS GLU-261; PHE-447; ILE-449 AND LEU-456</scope>
    <scope>CHARACTERIZATION OF VARIANTS PHE-447; ILE-449 AND LEU-456</scope>
    <scope>FUNCTION</scope>
    <scope>TRANSPORTER ACTIVITY</scope>
</reference>
<comment type="function">
    <text evidence="1 6 7 8">Voltage-gated potassium channel that mediates transmembrane potassium transport in excitable membranes. Forms tetrameric potassium-selective channels through which potassium ions pass in accordance with their electrochemical gradient (PubMed:14575698, PubMed:2347305). The channel alternates between opened and closed conformations in response to the voltage difference across the membrane (PubMed:14575698, PubMed:2347305). Can form functional homotetrameric channels and heterotetrameric channels that contain variable proportions of KCNA1, KCNA2, KCNA4, KCNA6, and possibly other family members as well; channel properties depend on the type of alpha subunits that are part of the channel (By similarity). Channel properties are modulated by cytoplasmic beta subunits that regulate the subcellular location of the alpha subunits and promote rapid inactivation (By similarity). Homotetrameric channels display rapid activation and slow inactivation (PubMed:2347305).</text>
</comment>
<comment type="catalytic activity">
    <reaction evidence="6 7 8">
        <text>K(+)(in) = K(+)(out)</text>
        <dbReference type="Rhea" id="RHEA:29463"/>
        <dbReference type="ChEBI" id="CHEBI:29103"/>
    </reaction>
</comment>
<comment type="subunit">
    <text evidence="1 10">Homotetramer and heterotetramer of potassium channel proteins (By similarity). Interacts with KCNAB1 and KCNAB2 (By similarity).</text>
</comment>
<comment type="interaction">
    <interactant intactId="EBI-6426142">
        <id>P17658</id>
    </interactant>
    <interactant intactId="EBI-8645574">
        <id>Q9UPQ8</id>
        <label>DOLK</label>
    </interactant>
    <organismsDiffer>false</organismsDiffer>
    <experiments>6</experiments>
</comment>
<comment type="subcellular location">
    <subcellularLocation>
        <location evidence="6 7">Cell membrane</location>
        <topology evidence="10">Multi-pass membrane protein</topology>
    </subcellularLocation>
</comment>
<comment type="domain">
    <text>The N-terminus may be important in determining the rate of inactivation of the channel while the tail may play a role in modulation of channel activity and/or targeting of the channel to specific subcellular compartments.</text>
</comment>
<comment type="domain">
    <text evidence="2">The transmembrane segment S4 functions as a voltage-sensor and is characterized by a series of positively charged amino acids at every third position. Channel opening and closing is effected by a conformation change that affects the position and orientation of the voltage-sensor paddle formed by S3 and S4 within the membrane. A transmembrane electric field that is positive inside would push the positively charged S4 segment outwards, thereby opening the pore, while a field that is negative inside would pull the S4 segment inwards and close the pore. Changes in the position and orientation of S4 are then transmitted to the activation gate formed by the inner helix bundle via the S4-S5 linker region.</text>
</comment>
<comment type="similarity">
    <text evidence="10">Belongs to the potassium channel family. A (Shaker) (TC 1.A.1.2) subfamily. Kv1.6/KCNA6 sub-subfamily.</text>
</comment>
<feature type="chain" id="PRO_0000053990" description="Potassium voltage-gated channel subfamily A member 6">
    <location>
        <begin position="1"/>
        <end position="529"/>
    </location>
</feature>
<feature type="topological domain" description="Cytoplasmic" evidence="2">
    <location>
        <begin position="1"/>
        <end position="171"/>
    </location>
</feature>
<feature type="transmembrane region" description="Helical; Name=Segment S1" evidence="2">
    <location>
        <begin position="172"/>
        <end position="193"/>
    </location>
</feature>
<feature type="topological domain" description="Extracellular" evidence="2">
    <location>
        <begin position="194"/>
        <end position="262"/>
    </location>
</feature>
<feature type="transmembrane region" description="Helical; Name=Segment S2" evidence="2">
    <location>
        <begin position="263"/>
        <end position="284"/>
    </location>
</feature>
<feature type="topological domain" description="Cytoplasmic" evidence="2">
    <location>
        <begin position="285"/>
        <end position="295"/>
    </location>
</feature>
<feature type="transmembrane region" description="Helical; Name=Segment S3" evidence="2">
    <location>
        <begin position="296"/>
        <end position="316"/>
    </location>
</feature>
<feature type="topological domain" description="Extracellular" evidence="2">
    <location>
        <begin position="317"/>
        <end position="337"/>
    </location>
</feature>
<feature type="transmembrane region" description="Helical; Voltage-sensor; Name=Segment S4" evidence="2">
    <location>
        <begin position="338"/>
        <end position="358"/>
    </location>
</feature>
<feature type="topological domain" description="Cytoplasmic" evidence="2">
    <location>
        <begin position="359"/>
        <end position="373"/>
    </location>
</feature>
<feature type="transmembrane region" description="Helical; Name=Segment S5" evidence="2">
    <location>
        <begin position="374"/>
        <end position="395"/>
    </location>
</feature>
<feature type="topological domain" description="Extracellular" evidence="2">
    <location>
        <begin position="396"/>
        <end position="409"/>
    </location>
</feature>
<feature type="intramembrane region" description="Helical; Name=Pore helix" evidence="2">
    <location>
        <begin position="410"/>
        <end position="421"/>
    </location>
</feature>
<feature type="intramembrane region" evidence="2">
    <location>
        <begin position="422"/>
        <end position="429"/>
    </location>
</feature>
<feature type="topological domain" description="Extracellular" evidence="2">
    <location>
        <begin position="430"/>
        <end position="436"/>
    </location>
</feature>
<feature type="transmembrane region" description="Helical; Name=Segment S6" evidence="2">
    <location>
        <begin position="437"/>
        <end position="465"/>
    </location>
</feature>
<feature type="topological domain" description="Cytoplasmic" evidence="2">
    <location>
        <begin position="466"/>
        <end position="529"/>
    </location>
</feature>
<feature type="region of interest" description="Disordered" evidence="5">
    <location>
        <begin position="1"/>
        <end position="33"/>
    </location>
</feature>
<feature type="region of interest" description="Disordered" evidence="5">
    <location>
        <begin position="210"/>
        <end position="233"/>
    </location>
</feature>
<feature type="region of interest" description="S4-S5 linker" evidence="2">
    <location>
        <begin position="360"/>
        <end position="373"/>
    </location>
</feature>
<feature type="region of interest" description="Disordered" evidence="5">
    <location>
        <begin position="488"/>
        <end position="513"/>
    </location>
</feature>
<feature type="short sequence motif" description="Selectivity filter" evidence="2">
    <location>
        <begin position="422"/>
        <end position="427"/>
    </location>
</feature>
<feature type="short sequence motif" description="PDZ-binding" evidence="4">
    <location>
        <begin position="527"/>
        <end position="529"/>
    </location>
</feature>
<feature type="compositionally biased region" description="Low complexity" evidence="5">
    <location>
        <begin position="210"/>
        <end position="220"/>
    </location>
</feature>
<feature type="compositionally biased region" description="Basic and acidic residues" evidence="5">
    <location>
        <begin position="500"/>
        <end position="510"/>
    </location>
</feature>
<feature type="modified residue" description="Phosphoserine" evidence="3">
    <location>
        <position position="3"/>
    </location>
</feature>
<feature type="modified residue" description="Phosphoserine; by PKA" evidence="10">
    <location>
        <position position="511"/>
    </location>
</feature>
<feature type="lipid moiety-binding region" description="S-palmitoyl cysteine" evidence="4">
    <location>
        <position position="285"/>
    </location>
</feature>
<feature type="sequence variant" id="VAR_087560" description="Found in a patient with neurodevelopmental anomalies; uncertain significance." evidence="8">
    <original>D</original>
    <variation>E</variation>
    <location>
        <position position="261"/>
    </location>
</feature>
<feature type="sequence variant" id="VAR_087561" description="Found in a patient with epilepsy but without evidence of neurodevelopmental impairment; uncertain significance; affects channel properties resulting in slower channel deactivation." evidence="8">
    <original>V</original>
    <variation>F</variation>
    <location>
        <position position="447"/>
    </location>
</feature>
<feature type="sequence variant" id="VAR_087562" description="Found in a patient with epilepsy and neurodevelopmental anomalies; uncertain significance; affects channel properties resulting in slower channel deactivation." evidence="8">
    <original>T</original>
    <variation>I</variation>
    <location>
        <position position="449"/>
    </location>
</feature>
<feature type="sequence variant" id="VAR_087563" description="Found in a patient with epilepsy and neurodevelopmental anomalies; uncertain significance; affects channel properties resulting in slower channel deactivation." evidence="8">
    <original>V</original>
    <variation>L</variation>
    <location>
        <position position="456"/>
    </location>
</feature>
<proteinExistence type="evidence at protein level"/>
<sequence length="529" mass="58729">MRSEKSLTLAAPGEVRGPEGEQQDAGDFPEAGGGGGCCSSERLVINISGLRFETQLRTLSLFPDTLLGDPGRRVRFFDPLRNEYFFDRNRPSFDAILYYYQSGGRLRRPVNVPLDIFLEEIRFYQLGDEALAAFREDEGCLPEGGEDEKPLPSQPFQRQVWLLFEYPESSGPARGIAIVSVLVILISIVIFCLETLPQFRVDGRGGNNGGVSRVSPVSRGSQEEEEDEDDSYTFHHGITPGEMGTGGSSSLSTLGGSFFTDPFFLVETLCIVWFTFELLVRFSACPSKPAFFRNIMNIIDLVAIFPYFITLGTELVQQQEQQPASGGGGQNGQQAMSLAILRVIRLVRVFRIFKLSRHSKGLQILGKTLQASMRELGLLIFFLFIGVILFSSAVYFAEADDDDSLFPSIPDAFWWAVVTMTTVGYGDMYPMTVGGKIVGSLCAIAGVLTIALPVPVIVSNFNYFYHRETEQEEQGQYTHVTCGQPAPDLRATDNGLGKPDFPEANRERRPSYLPTPHRAYAEKRMLTEV</sequence>
<name>KCNA6_HUMAN</name>
<organism>
    <name type="scientific">Homo sapiens</name>
    <name type="common">Human</name>
    <dbReference type="NCBI Taxonomy" id="9606"/>
    <lineage>
        <taxon>Eukaryota</taxon>
        <taxon>Metazoa</taxon>
        <taxon>Chordata</taxon>
        <taxon>Craniata</taxon>
        <taxon>Vertebrata</taxon>
        <taxon>Euteleostomi</taxon>
        <taxon>Mammalia</taxon>
        <taxon>Eutheria</taxon>
        <taxon>Euarchontoglires</taxon>
        <taxon>Primates</taxon>
        <taxon>Haplorrhini</taxon>
        <taxon>Catarrhini</taxon>
        <taxon>Hominidae</taxon>
        <taxon>Homo</taxon>
    </lineage>
</organism>
<protein>
    <recommendedName>
        <fullName>Potassium voltage-gated channel subfamily A member 6</fullName>
    </recommendedName>
    <alternativeName>
        <fullName evidence="9">Voltage-gated potassium channel HBK2</fullName>
    </alternativeName>
    <alternativeName>
        <fullName>Voltage-gated potassium channel subunit Kv1.6</fullName>
    </alternativeName>
</protein>
<gene>
    <name type="primary">KCNA6</name>
</gene>
<dbReference type="EMBL" id="X17622">
    <property type="protein sequence ID" value="CAA35623.1"/>
    <property type="molecule type" value="mRNA"/>
</dbReference>
<dbReference type="EMBL" id="BC069355">
    <property type="protein sequence ID" value="AAH69355.1"/>
    <property type="molecule type" value="mRNA"/>
</dbReference>
<dbReference type="CCDS" id="CCDS8534.1"/>
<dbReference type="PIR" id="S12787">
    <property type="entry name" value="S12787"/>
</dbReference>
<dbReference type="RefSeq" id="NP_002226.1">
    <property type="nucleotide sequence ID" value="NM_002235.5"/>
</dbReference>
<dbReference type="RefSeq" id="XP_005253743.1">
    <property type="nucleotide sequence ID" value="XM_005253686.3"/>
</dbReference>
<dbReference type="RefSeq" id="XP_011519257.1">
    <property type="nucleotide sequence ID" value="XM_011520955.2"/>
</dbReference>
<dbReference type="RefSeq" id="XP_016874759.1">
    <property type="nucleotide sequence ID" value="XM_017019270.2"/>
</dbReference>
<dbReference type="RefSeq" id="XP_016874760.1">
    <property type="nucleotide sequence ID" value="XM_017019271.2"/>
</dbReference>
<dbReference type="RefSeq" id="XP_016874761.1">
    <property type="nucleotide sequence ID" value="XM_017019272.2"/>
</dbReference>
<dbReference type="RefSeq" id="XP_054227948.1">
    <property type="nucleotide sequence ID" value="XM_054371973.1"/>
</dbReference>
<dbReference type="RefSeq" id="XP_054227949.1">
    <property type="nucleotide sequence ID" value="XM_054371974.1"/>
</dbReference>
<dbReference type="RefSeq" id="XP_054227950.1">
    <property type="nucleotide sequence ID" value="XM_054371975.1"/>
</dbReference>
<dbReference type="SMR" id="P17658"/>
<dbReference type="BioGRID" id="109944">
    <property type="interactions" value="18"/>
</dbReference>
<dbReference type="FunCoup" id="P17658">
    <property type="interactions" value="25"/>
</dbReference>
<dbReference type="IntAct" id="P17658">
    <property type="interactions" value="11"/>
</dbReference>
<dbReference type="STRING" id="9606.ENSP00000280684"/>
<dbReference type="BindingDB" id="P17658"/>
<dbReference type="ChEMBL" id="CHEMBL5279"/>
<dbReference type="DrugBank" id="DB06637">
    <property type="generic name" value="Dalfampridine"/>
</dbReference>
<dbReference type="DrugBank" id="DB00228">
    <property type="generic name" value="Enflurane"/>
</dbReference>
<dbReference type="DrugBank" id="DB01110">
    <property type="generic name" value="Miconazole"/>
</dbReference>
<dbReference type="DrugBank" id="DB01069">
    <property type="generic name" value="Promethazine"/>
</dbReference>
<dbReference type="DrugCentral" id="P17658"/>
<dbReference type="GuidetoPHARMACOLOGY" id="543"/>
<dbReference type="TCDB" id="1.A.1.2.29">
    <property type="family name" value="the voltage-gated ion channel (vic) superfamily"/>
</dbReference>
<dbReference type="GlyGen" id="P17658">
    <property type="glycosylation" value="2 sites"/>
</dbReference>
<dbReference type="iPTMnet" id="P17658"/>
<dbReference type="PhosphoSitePlus" id="P17658"/>
<dbReference type="BioMuta" id="HGNC:6225"/>
<dbReference type="DMDM" id="116434"/>
<dbReference type="MassIVE" id="P17658"/>
<dbReference type="PaxDb" id="9606-ENSP00000280684"/>
<dbReference type="PeptideAtlas" id="P17658"/>
<dbReference type="ProteomicsDB" id="53501"/>
<dbReference type="ABCD" id="P17658">
    <property type="antibodies" value="1 sequenced antibody"/>
</dbReference>
<dbReference type="Antibodypedia" id="3161">
    <property type="antibodies" value="119 antibodies from 22 providers"/>
</dbReference>
<dbReference type="DNASU" id="3742"/>
<dbReference type="Ensembl" id="ENST00000280684.4">
    <property type="protein sequence ID" value="ENSP00000280684.3"/>
    <property type="gene ID" value="ENSG00000151079.8"/>
</dbReference>
<dbReference type="GeneID" id="3742"/>
<dbReference type="KEGG" id="hsa:3742"/>
<dbReference type="MANE-Select" id="ENST00000280684.4">
    <property type="protein sequence ID" value="ENSP00000280684.3"/>
    <property type="RefSeq nucleotide sequence ID" value="NM_002235.5"/>
    <property type="RefSeq protein sequence ID" value="NP_002226.1"/>
</dbReference>
<dbReference type="UCSC" id="uc001qng.4">
    <property type="organism name" value="human"/>
</dbReference>
<dbReference type="AGR" id="HGNC:6225"/>
<dbReference type="CTD" id="3742"/>
<dbReference type="DisGeNET" id="3742"/>
<dbReference type="GeneCards" id="KCNA6"/>
<dbReference type="HGNC" id="HGNC:6225">
    <property type="gene designation" value="KCNA6"/>
</dbReference>
<dbReference type="HPA" id="ENSG00000151079">
    <property type="expression patterns" value="Tissue enriched (brain)"/>
</dbReference>
<dbReference type="MIM" id="176257">
    <property type="type" value="gene"/>
</dbReference>
<dbReference type="neXtProt" id="NX_P17658"/>
<dbReference type="OpenTargets" id="ENSG00000151079"/>
<dbReference type="PharmGKB" id="PA30022"/>
<dbReference type="VEuPathDB" id="HostDB:ENSG00000151079"/>
<dbReference type="eggNOG" id="KOG1545">
    <property type="taxonomic scope" value="Eukaryota"/>
</dbReference>
<dbReference type="GeneTree" id="ENSGT00940000162469"/>
<dbReference type="HOGENOM" id="CLU_011722_4_0_1"/>
<dbReference type="InParanoid" id="P17658"/>
<dbReference type="OMA" id="STPHRVY"/>
<dbReference type="OrthoDB" id="415460at2759"/>
<dbReference type="PAN-GO" id="P17658">
    <property type="GO annotations" value="4 GO annotations based on evolutionary models"/>
</dbReference>
<dbReference type="PhylomeDB" id="P17658"/>
<dbReference type="TreeFam" id="TF313103"/>
<dbReference type="PathwayCommons" id="P17658"/>
<dbReference type="Reactome" id="R-HSA-1296072">
    <property type="pathway name" value="Voltage gated Potassium channels"/>
</dbReference>
<dbReference type="SignaLink" id="P17658"/>
<dbReference type="BioGRID-ORCS" id="3742">
    <property type="hits" value="20 hits in 1145 CRISPR screens"/>
</dbReference>
<dbReference type="ChiTaRS" id="KCNA6">
    <property type="organism name" value="human"/>
</dbReference>
<dbReference type="GeneWiki" id="KCNA6"/>
<dbReference type="GenomeRNAi" id="3742"/>
<dbReference type="Pharos" id="P17658">
    <property type="development level" value="Tclin"/>
</dbReference>
<dbReference type="PRO" id="PR:P17658"/>
<dbReference type="Proteomes" id="UP000005640">
    <property type="component" value="Chromosome 12"/>
</dbReference>
<dbReference type="RNAct" id="P17658">
    <property type="molecule type" value="protein"/>
</dbReference>
<dbReference type="Bgee" id="ENSG00000151079">
    <property type="expression patterns" value="Expressed in cortical plate and 76 other cell types or tissues"/>
</dbReference>
<dbReference type="GO" id="GO:0043679">
    <property type="term" value="C:axon terminus"/>
    <property type="evidence" value="ECO:0007669"/>
    <property type="project" value="Ensembl"/>
</dbReference>
<dbReference type="GO" id="GO:0005829">
    <property type="term" value="C:cytosol"/>
    <property type="evidence" value="ECO:0000314"/>
    <property type="project" value="HPA"/>
</dbReference>
<dbReference type="GO" id="GO:0043231">
    <property type="term" value="C:intracellular membrane-bounded organelle"/>
    <property type="evidence" value="ECO:0000314"/>
    <property type="project" value="HPA"/>
</dbReference>
<dbReference type="GO" id="GO:0016020">
    <property type="term" value="C:membrane"/>
    <property type="evidence" value="ECO:0000318"/>
    <property type="project" value="GO_Central"/>
</dbReference>
<dbReference type="GO" id="GO:0005886">
    <property type="term" value="C:plasma membrane"/>
    <property type="evidence" value="ECO:0000314"/>
    <property type="project" value="UniProtKB"/>
</dbReference>
<dbReference type="GO" id="GO:0034705">
    <property type="term" value="C:potassium channel complex"/>
    <property type="evidence" value="ECO:0000250"/>
    <property type="project" value="UniProtKB"/>
</dbReference>
<dbReference type="GO" id="GO:0008076">
    <property type="term" value="C:voltage-gated potassium channel complex"/>
    <property type="evidence" value="ECO:0000250"/>
    <property type="project" value="UniProtKB"/>
</dbReference>
<dbReference type="GO" id="GO:0005251">
    <property type="term" value="F:delayed rectifier potassium channel activity"/>
    <property type="evidence" value="ECO:0000314"/>
    <property type="project" value="UniProtKB"/>
</dbReference>
<dbReference type="GO" id="GO:0005249">
    <property type="term" value="F:voltage-gated potassium channel activity"/>
    <property type="evidence" value="ECO:0000314"/>
    <property type="project" value="UniProtKB"/>
</dbReference>
<dbReference type="GO" id="GO:0001508">
    <property type="term" value="P:action potential"/>
    <property type="evidence" value="ECO:0000318"/>
    <property type="project" value="GO_Central"/>
</dbReference>
<dbReference type="GO" id="GO:0071805">
    <property type="term" value="P:potassium ion transmembrane transport"/>
    <property type="evidence" value="ECO:0000314"/>
    <property type="project" value="UniProtKB"/>
</dbReference>
<dbReference type="GO" id="GO:0006813">
    <property type="term" value="P:potassium ion transport"/>
    <property type="evidence" value="ECO:0000304"/>
    <property type="project" value="ProtInc"/>
</dbReference>
<dbReference type="GO" id="GO:0051260">
    <property type="term" value="P:protein homooligomerization"/>
    <property type="evidence" value="ECO:0007669"/>
    <property type="project" value="InterPro"/>
</dbReference>
<dbReference type="CDD" id="cd18407">
    <property type="entry name" value="BTB_POZ_KCNA6"/>
    <property type="match status" value="1"/>
</dbReference>
<dbReference type="FunFam" id="1.10.287.70:FF:000002">
    <property type="entry name" value="Potassium voltage-gated channel subfamily a member"/>
    <property type="match status" value="1"/>
</dbReference>
<dbReference type="FunFam" id="3.30.710.10:FF:000012">
    <property type="entry name" value="Potassium voltage-gated channel subfamily A member 10"/>
    <property type="match status" value="1"/>
</dbReference>
<dbReference type="FunFam" id="1.20.120.350:FF:000025">
    <property type="entry name" value="Potassium voltage-gated channel subfamily A member 2"/>
    <property type="match status" value="1"/>
</dbReference>
<dbReference type="Gene3D" id="1.10.287.70">
    <property type="match status" value="1"/>
</dbReference>
<dbReference type="Gene3D" id="3.30.710.10">
    <property type="entry name" value="Potassium Channel Kv1.1, Chain A"/>
    <property type="match status" value="1"/>
</dbReference>
<dbReference type="Gene3D" id="1.20.120.350">
    <property type="entry name" value="Voltage-gated potassium channels. Chain C"/>
    <property type="match status" value="1"/>
</dbReference>
<dbReference type="InterPro" id="IPR000210">
    <property type="entry name" value="BTB/POZ_dom"/>
</dbReference>
<dbReference type="InterPro" id="IPR005821">
    <property type="entry name" value="Ion_trans_dom"/>
</dbReference>
<dbReference type="InterPro" id="IPR003968">
    <property type="entry name" value="K_chnl_volt-dep_Kv"/>
</dbReference>
<dbReference type="InterPro" id="IPR003972">
    <property type="entry name" value="K_chnl_volt-dep_Kv1"/>
</dbReference>
<dbReference type="InterPro" id="IPR004053">
    <property type="entry name" value="KCNA6"/>
</dbReference>
<dbReference type="InterPro" id="IPR046988">
    <property type="entry name" value="KCNA6_BTB_POZ"/>
</dbReference>
<dbReference type="InterPro" id="IPR011333">
    <property type="entry name" value="SKP1/BTB/POZ_sf"/>
</dbReference>
<dbReference type="InterPro" id="IPR003131">
    <property type="entry name" value="T1-type_BTB"/>
</dbReference>
<dbReference type="InterPro" id="IPR028325">
    <property type="entry name" value="VG_K_chnl"/>
</dbReference>
<dbReference type="InterPro" id="IPR027359">
    <property type="entry name" value="Volt_channel_dom_sf"/>
</dbReference>
<dbReference type="PANTHER" id="PTHR11537:SF104">
    <property type="entry name" value="POTASSIUM VOLTAGE-GATED CHANNEL SUBFAMILY A MEMBER 6"/>
    <property type="match status" value="1"/>
</dbReference>
<dbReference type="PANTHER" id="PTHR11537">
    <property type="entry name" value="VOLTAGE-GATED POTASSIUM CHANNEL"/>
    <property type="match status" value="1"/>
</dbReference>
<dbReference type="Pfam" id="PF02214">
    <property type="entry name" value="BTB_2"/>
    <property type="match status" value="1"/>
</dbReference>
<dbReference type="Pfam" id="PF00520">
    <property type="entry name" value="Ion_trans"/>
    <property type="match status" value="1"/>
</dbReference>
<dbReference type="PRINTS" id="PR00169">
    <property type="entry name" value="KCHANNEL"/>
</dbReference>
<dbReference type="PRINTS" id="PR01513">
    <property type="entry name" value="KV16CHANNEL"/>
</dbReference>
<dbReference type="PRINTS" id="PR01491">
    <property type="entry name" value="KVCHANNEL"/>
</dbReference>
<dbReference type="PRINTS" id="PR01496">
    <property type="entry name" value="SHAKERCHANEL"/>
</dbReference>
<dbReference type="SMART" id="SM00225">
    <property type="entry name" value="BTB"/>
    <property type="match status" value="1"/>
</dbReference>
<dbReference type="SUPFAM" id="SSF54695">
    <property type="entry name" value="POZ domain"/>
    <property type="match status" value="1"/>
</dbReference>
<dbReference type="SUPFAM" id="SSF81324">
    <property type="entry name" value="Voltage-gated potassium channels"/>
    <property type="match status" value="1"/>
</dbReference>